<reference key="1">
    <citation type="journal article" date="2005" name="Science">
        <title>The transcriptional landscape of the mammalian genome.</title>
        <authorList>
            <person name="Carninci P."/>
            <person name="Kasukawa T."/>
            <person name="Katayama S."/>
            <person name="Gough J."/>
            <person name="Frith M.C."/>
            <person name="Maeda N."/>
            <person name="Oyama R."/>
            <person name="Ravasi T."/>
            <person name="Lenhard B."/>
            <person name="Wells C."/>
            <person name="Kodzius R."/>
            <person name="Shimokawa K."/>
            <person name="Bajic V.B."/>
            <person name="Brenner S.E."/>
            <person name="Batalov S."/>
            <person name="Forrest A.R."/>
            <person name="Zavolan M."/>
            <person name="Davis M.J."/>
            <person name="Wilming L.G."/>
            <person name="Aidinis V."/>
            <person name="Allen J.E."/>
            <person name="Ambesi-Impiombato A."/>
            <person name="Apweiler R."/>
            <person name="Aturaliya R.N."/>
            <person name="Bailey T.L."/>
            <person name="Bansal M."/>
            <person name="Baxter L."/>
            <person name="Beisel K.W."/>
            <person name="Bersano T."/>
            <person name="Bono H."/>
            <person name="Chalk A.M."/>
            <person name="Chiu K.P."/>
            <person name="Choudhary V."/>
            <person name="Christoffels A."/>
            <person name="Clutterbuck D.R."/>
            <person name="Crowe M.L."/>
            <person name="Dalla E."/>
            <person name="Dalrymple B.P."/>
            <person name="de Bono B."/>
            <person name="Della Gatta G."/>
            <person name="di Bernardo D."/>
            <person name="Down T."/>
            <person name="Engstrom P."/>
            <person name="Fagiolini M."/>
            <person name="Faulkner G."/>
            <person name="Fletcher C.F."/>
            <person name="Fukushima T."/>
            <person name="Furuno M."/>
            <person name="Futaki S."/>
            <person name="Gariboldi M."/>
            <person name="Georgii-Hemming P."/>
            <person name="Gingeras T.R."/>
            <person name="Gojobori T."/>
            <person name="Green R.E."/>
            <person name="Gustincich S."/>
            <person name="Harbers M."/>
            <person name="Hayashi Y."/>
            <person name="Hensch T.K."/>
            <person name="Hirokawa N."/>
            <person name="Hill D."/>
            <person name="Huminiecki L."/>
            <person name="Iacono M."/>
            <person name="Ikeo K."/>
            <person name="Iwama A."/>
            <person name="Ishikawa T."/>
            <person name="Jakt M."/>
            <person name="Kanapin A."/>
            <person name="Katoh M."/>
            <person name="Kawasawa Y."/>
            <person name="Kelso J."/>
            <person name="Kitamura H."/>
            <person name="Kitano H."/>
            <person name="Kollias G."/>
            <person name="Krishnan S.P."/>
            <person name="Kruger A."/>
            <person name="Kummerfeld S.K."/>
            <person name="Kurochkin I.V."/>
            <person name="Lareau L.F."/>
            <person name="Lazarevic D."/>
            <person name="Lipovich L."/>
            <person name="Liu J."/>
            <person name="Liuni S."/>
            <person name="McWilliam S."/>
            <person name="Madan Babu M."/>
            <person name="Madera M."/>
            <person name="Marchionni L."/>
            <person name="Matsuda H."/>
            <person name="Matsuzawa S."/>
            <person name="Miki H."/>
            <person name="Mignone F."/>
            <person name="Miyake S."/>
            <person name="Morris K."/>
            <person name="Mottagui-Tabar S."/>
            <person name="Mulder N."/>
            <person name="Nakano N."/>
            <person name="Nakauchi H."/>
            <person name="Ng P."/>
            <person name="Nilsson R."/>
            <person name="Nishiguchi S."/>
            <person name="Nishikawa S."/>
            <person name="Nori F."/>
            <person name="Ohara O."/>
            <person name="Okazaki Y."/>
            <person name="Orlando V."/>
            <person name="Pang K.C."/>
            <person name="Pavan W.J."/>
            <person name="Pavesi G."/>
            <person name="Pesole G."/>
            <person name="Petrovsky N."/>
            <person name="Piazza S."/>
            <person name="Reed J."/>
            <person name="Reid J.F."/>
            <person name="Ring B.Z."/>
            <person name="Ringwald M."/>
            <person name="Rost B."/>
            <person name="Ruan Y."/>
            <person name="Salzberg S.L."/>
            <person name="Sandelin A."/>
            <person name="Schneider C."/>
            <person name="Schoenbach C."/>
            <person name="Sekiguchi K."/>
            <person name="Semple C.A."/>
            <person name="Seno S."/>
            <person name="Sessa L."/>
            <person name="Sheng Y."/>
            <person name="Shibata Y."/>
            <person name="Shimada H."/>
            <person name="Shimada K."/>
            <person name="Silva D."/>
            <person name="Sinclair B."/>
            <person name="Sperling S."/>
            <person name="Stupka E."/>
            <person name="Sugiura K."/>
            <person name="Sultana R."/>
            <person name="Takenaka Y."/>
            <person name="Taki K."/>
            <person name="Tammoja K."/>
            <person name="Tan S.L."/>
            <person name="Tang S."/>
            <person name="Taylor M.S."/>
            <person name="Tegner J."/>
            <person name="Teichmann S.A."/>
            <person name="Ueda H.R."/>
            <person name="van Nimwegen E."/>
            <person name="Verardo R."/>
            <person name="Wei C.L."/>
            <person name="Yagi K."/>
            <person name="Yamanishi H."/>
            <person name="Zabarovsky E."/>
            <person name="Zhu S."/>
            <person name="Zimmer A."/>
            <person name="Hide W."/>
            <person name="Bult C."/>
            <person name="Grimmond S.M."/>
            <person name="Teasdale R.D."/>
            <person name="Liu E.T."/>
            <person name="Brusic V."/>
            <person name="Quackenbush J."/>
            <person name="Wahlestedt C."/>
            <person name="Mattick J.S."/>
            <person name="Hume D.A."/>
            <person name="Kai C."/>
            <person name="Sasaki D."/>
            <person name="Tomaru Y."/>
            <person name="Fukuda S."/>
            <person name="Kanamori-Katayama M."/>
            <person name="Suzuki M."/>
            <person name="Aoki J."/>
            <person name="Arakawa T."/>
            <person name="Iida J."/>
            <person name="Imamura K."/>
            <person name="Itoh M."/>
            <person name="Kato T."/>
            <person name="Kawaji H."/>
            <person name="Kawagashira N."/>
            <person name="Kawashima T."/>
            <person name="Kojima M."/>
            <person name="Kondo S."/>
            <person name="Konno H."/>
            <person name="Nakano K."/>
            <person name="Ninomiya N."/>
            <person name="Nishio T."/>
            <person name="Okada M."/>
            <person name="Plessy C."/>
            <person name="Shibata K."/>
            <person name="Shiraki T."/>
            <person name="Suzuki S."/>
            <person name="Tagami M."/>
            <person name="Waki K."/>
            <person name="Watahiki A."/>
            <person name="Okamura-Oho Y."/>
            <person name="Suzuki H."/>
            <person name="Kawai J."/>
            <person name="Hayashizaki Y."/>
        </authorList>
    </citation>
    <scope>NUCLEOTIDE SEQUENCE [LARGE SCALE MRNA]</scope>
    <source>
        <strain>C57BL/6J</strain>
    </source>
</reference>
<reference key="2">
    <citation type="journal article" date="2004" name="Genome Res.">
        <title>The status, quality, and expansion of the NIH full-length cDNA project: the Mammalian Gene Collection (MGC).</title>
        <authorList>
            <consortium name="The MGC Project Team"/>
        </authorList>
    </citation>
    <scope>NUCLEOTIDE SEQUENCE [LARGE SCALE MRNA]</scope>
    <source>
        <tissue>Embryo</tissue>
    </source>
</reference>
<reference key="3">
    <citation type="journal article" date="2010" name="Cell">
        <title>A tissue-specific atlas of mouse protein phosphorylation and expression.</title>
        <authorList>
            <person name="Huttlin E.L."/>
            <person name="Jedrychowski M.P."/>
            <person name="Elias J.E."/>
            <person name="Goswami T."/>
            <person name="Rad R."/>
            <person name="Beausoleil S.A."/>
            <person name="Villen J."/>
            <person name="Haas W."/>
            <person name="Sowa M.E."/>
            <person name="Gygi S.P."/>
        </authorList>
    </citation>
    <scope>PHOSPHORYLATION [LARGE SCALE ANALYSIS] AT SER-249</scope>
    <scope>IDENTIFICATION BY MASS SPECTROMETRY [LARGE SCALE ANALYSIS]</scope>
    <source>
        <tissue>Lung</tissue>
        <tissue>Spleen</tissue>
    </source>
</reference>
<keyword id="KW-1017">Isopeptide bond</keyword>
<keyword id="KW-0539">Nucleus</keyword>
<keyword id="KW-0597">Phosphoprotein</keyword>
<keyword id="KW-1185">Reference proteome</keyword>
<keyword id="KW-0677">Repeat</keyword>
<keyword id="KW-0832">Ubl conjugation</keyword>
<keyword id="KW-0853">WD repeat</keyword>
<dbReference type="EMBL" id="AK050738">
    <property type="protein sequence ID" value="BAC34400.1"/>
    <property type="molecule type" value="mRNA"/>
</dbReference>
<dbReference type="EMBL" id="AK050797">
    <property type="protein sequence ID" value="BAC34414.1"/>
    <property type="molecule type" value="mRNA"/>
</dbReference>
<dbReference type="EMBL" id="BC063100">
    <property type="protein sequence ID" value="AAH63100.1"/>
    <property type="molecule type" value="mRNA"/>
</dbReference>
<dbReference type="CCDS" id="CCDS17674.1"/>
<dbReference type="RefSeq" id="NP_780761.1">
    <property type="nucleotide sequence ID" value="NM_175552.5"/>
</dbReference>
<dbReference type="SMR" id="Q8BHB4"/>
<dbReference type="BioGRID" id="234655">
    <property type="interactions" value="4"/>
</dbReference>
<dbReference type="FunCoup" id="Q8BHB4">
    <property type="interactions" value="4433"/>
</dbReference>
<dbReference type="STRING" id="10090.ENSMUSP00000060613"/>
<dbReference type="GlyGen" id="Q8BHB4">
    <property type="glycosylation" value="1 site, 1 O-linked glycan (1 site)"/>
</dbReference>
<dbReference type="iPTMnet" id="Q8BHB4"/>
<dbReference type="PhosphoSitePlus" id="Q8BHB4"/>
<dbReference type="SwissPalm" id="Q8BHB4"/>
<dbReference type="PaxDb" id="10090-ENSMUSP00000060613"/>
<dbReference type="PeptideAtlas" id="Q8BHB4"/>
<dbReference type="ProteomicsDB" id="297647"/>
<dbReference type="Pumba" id="Q8BHB4"/>
<dbReference type="Antibodypedia" id="33896">
    <property type="antibodies" value="99 antibodies from 21 providers"/>
</dbReference>
<dbReference type="DNASU" id="269470"/>
<dbReference type="Ensembl" id="ENSMUST00000052120.14">
    <property type="protein sequence ID" value="ENSMUSP00000060613.8"/>
    <property type="gene ID" value="ENSMUSG00000033285.16"/>
</dbReference>
<dbReference type="GeneID" id="269470"/>
<dbReference type="KEGG" id="mmu:269470"/>
<dbReference type="UCSC" id="uc008qqo.2">
    <property type="organism name" value="mouse"/>
</dbReference>
<dbReference type="AGR" id="MGI:2443143"/>
<dbReference type="CTD" id="10885"/>
<dbReference type="MGI" id="MGI:2443143">
    <property type="gene designation" value="Wdr3"/>
</dbReference>
<dbReference type="VEuPathDB" id="HostDB:ENSMUSG00000033285"/>
<dbReference type="eggNOG" id="KOG0306">
    <property type="taxonomic scope" value="Eukaryota"/>
</dbReference>
<dbReference type="GeneTree" id="ENSGT00940000153859"/>
<dbReference type="HOGENOM" id="CLU_005318_0_1_1"/>
<dbReference type="InParanoid" id="Q8BHB4"/>
<dbReference type="OMA" id="MNIPLTC"/>
<dbReference type="OrthoDB" id="407922at2759"/>
<dbReference type="PhylomeDB" id="Q8BHB4"/>
<dbReference type="TreeFam" id="TF300427"/>
<dbReference type="Reactome" id="R-MMU-6791226">
    <property type="pathway name" value="Major pathway of rRNA processing in the nucleolus and cytosol"/>
</dbReference>
<dbReference type="BioGRID-ORCS" id="269470">
    <property type="hits" value="27 hits in 83 CRISPR screens"/>
</dbReference>
<dbReference type="ChiTaRS" id="Wdr3">
    <property type="organism name" value="mouse"/>
</dbReference>
<dbReference type="PRO" id="PR:Q8BHB4"/>
<dbReference type="Proteomes" id="UP000000589">
    <property type="component" value="Chromosome 3"/>
</dbReference>
<dbReference type="RNAct" id="Q8BHB4">
    <property type="molecule type" value="protein"/>
</dbReference>
<dbReference type="Bgee" id="ENSMUSG00000033285">
    <property type="expression patterns" value="Expressed in metanephric renal vesicle and 224 other cell types or tissues"/>
</dbReference>
<dbReference type="ExpressionAtlas" id="Q8BHB4">
    <property type="expression patterns" value="baseline and differential"/>
</dbReference>
<dbReference type="GO" id="GO:0031965">
    <property type="term" value="C:nuclear membrane"/>
    <property type="evidence" value="ECO:0007669"/>
    <property type="project" value="Ensembl"/>
</dbReference>
<dbReference type="GO" id="GO:0005730">
    <property type="term" value="C:nucleolus"/>
    <property type="evidence" value="ECO:0007669"/>
    <property type="project" value="UniProtKB-SubCell"/>
</dbReference>
<dbReference type="GO" id="GO:0005654">
    <property type="term" value="C:nucleoplasm"/>
    <property type="evidence" value="ECO:0007669"/>
    <property type="project" value="Ensembl"/>
</dbReference>
<dbReference type="GO" id="GO:0032040">
    <property type="term" value="C:small-subunit processome"/>
    <property type="evidence" value="ECO:0000250"/>
    <property type="project" value="UniProtKB"/>
</dbReference>
<dbReference type="GO" id="GO:0042274">
    <property type="term" value="P:ribosomal small subunit biogenesis"/>
    <property type="evidence" value="ECO:0000250"/>
    <property type="project" value="UniProtKB"/>
</dbReference>
<dbReference type="CDD" id="cd00200">
    <property type="entry name" value="WD40"/>
    <property type="match status" value="2"/>
</dbReference>
<dbReference type="FunFam" id="2.130.10.10:FF:000172">
    <property type="entry name" value="WD repeat domain 3"/>
    <property type="match status" value="1"/>
</dbReference>
<dbReference type="FunFam" id="2.130.10.10:FF:000177">
    <property type="entry name" value="WD repeat domain 3"/>
    <property type="match status" value="1"/>
</dbReference>
<dbReference type="FunFam" id="2.130.10.10:FF:000307">
    <property type="entry name" value="WD repeat domain 3"/>
    <property type="match status" value="1"/>
</dbReference>
<dbReference type="FunFam" id="2.130.10.10:FF:001148">
    <property type="entry name" value="WD repeat-containing protein 3"/>
    <property type="match status" value="1"/>
</dbReference>
<dbReference type="Gene3D" id="2.130.10.10">
    <property type="entry name" value="YVTN repeat-like/Quinoprotein amine dehydrogenase"/>
    <property type="match status" value="4"/>
</dbReference>
<dbReference type="InterPro" id="IPR020472">
    <property type="entry name" value="G-protein_beta_WD-40_rep"/>
</dbReference>
<dbReference type="InterPro" id="IPR011047">
    <property type="entry name" value="Quinoprotein_ADH-like_sf"/>
</dbReference>
<dbReference type="InterPro" id="IPR007148">
    <property type="entry name" value="SSU_processome_Utp12"/>
</dbReference>
<dbReference type="InterPro" id="IPR051570">
    <property type="entry name" value="TBC1_cilium_biogenesis"/>
</dbReference>
<dbReference type="InterPro" id="IPR015943">
    <property type="entry name" value="WD40/YVTN_repeat-like_dom_sf"/>
</dbReference>
<dbReference type="InterPro" id="IPR019775">
    <property type="entry name" value="WD40_repeat_CS"/>
</dbReference>
<dbReference type="InterPro" id="IPR001680">
    <property type="entry name" value="WD40_rpt"/>
</dbReference>
<dbReference type="PANTHER" id="PTHR19853">
    <property type="entry name" value="WD REPEAT CONTAINING PROTEIN 3 WDR3"/>
    <property type="match status" value="1"/>
</dbReference>
<dbReference type="PANTHER" id="PTHR19853:SF0">
    <property type="entry name" value="WD REPEAT-CONTAINING PROTEIN 3"/>
    <property type="match status" value="1"/>
</dbReference>
<dbReference type="Pfam" id="PF25173">
    <property type="entry name" value="Beta-prop_WDR3_1st"/>
    <property type="match status" value="1"/>
</dbReference>
<dbReference type="Pfam" id="PF25172">
    <property type="entry name" value="Beta-prop_WDR3_2nd"/>
    <property type="match status" value="1"/>
</dbReference>
<dbReference type="Pfam" id="PF04003">
    <property type="entry name" value="Utp12"/>
    <property type="match status" value="1"/>
</dbReference>
<dbReference type="PRINTS" id="PR00320">
    <property type="entry name" value="GPROTEINBRPT"/>
</dbReference>
<dbReference type="SMART" id="SM00320">
    <property type="entry name" value="WD40"/>
    <property type="match status" value="11"/>
</dbReference>
<dbReference type="SUPFAM" id="SSF50998">
    <property type="entry name" value="Quinoprotein alcohol dehydrogenase-like"/>
    <property type="match status" value="1"/>
</dbReference>
<dbReference type="PROSITE" id="PS00678">
    <property type="entry name" value="WD_REPEATS_1"/>
    <property type="match status" value="2"/>
</dbReference>
<dbReference type="PROSITE" id="PS50082">
    <property type="entry name" value="WD_REPEATS_2"/>
    <property type="match status" value="9"/>
</dbReference>
<dbReference type="PROSITE" id="PS50294">
    <property type="entry name" value="WD_REPEATS_REGION"/>
    <property type="match status" value="1"/>
</dbReference>
<gene>
    <name type="primary">Wdr3</name>
</gene>
<protein>
    <recommendedName>
        <fullName>WD repeat-containing protein 3</fullName>
    </recommendedName>
</protein>
<name>WDR3_MOUSE</name>
<accession>Q8BHB4</accession>
<comment type="function">
    <text evidence="1">Part of the small subunit (SSU) processome, first precursor of the small eukaryotic ribosomal subunit. During the assembly of the SSU processome in the nucleolus, many ribosome biogenesis factors, an RNA chaperone and ribosomal proteins associate with the nascent pre-rRNA and work in concert to generate RNA folding, modifications, rearrangements and cleavage as well as targeted degradation of pre-ribosomal RNA by the RNA exosome.</text>
</comment>
<comment type="subunit">
    <text evidence="1">Part of the small subunit (SSU) processome, composed of more than 70 proteins and the RNA chaperone small nucleolar RNA (snoRNA) U3.</text>
</comment>
<comment type="subcellular location">
    <subcellularLocation>
        <location evidence="1">Nucleus</location>
        <location evidence="1">Nucleolus</location>
    </subcellularLocation>
</comment>
<comment type="similarity">
    <text evidence="3">Belongs to the WD repeat WDR3/UTP12 family.</text>
</comment>
<proteinExistence type="evidence at protein level"/>
<organism>
    <name type="scientific">Mus musculus</name>
    <name type="common">Mouse</name>
    <dbReference type="NCBI Taxonomy" id="10090"/>
    <lineage>
        <taxon>Eukaryota</taxon>
        <taxon>Metazoa</taxon>
        <taxon>Chordata</taxon>
        <taxon>Craniata</taxon>
        <taxon>Vertebrata</taxon>
        <taxon>Euteleostomi</taxon>
        <taxon>Mammalia</taxon>
        <taxon>Eutheria</taxon>
        <taxon>Euarchontoglires</taxon>
        <taxon>Glires</taxon>
        <taxon>Rodentia</taxon>
        <taxon>Myomorpha</taxon>
        <taxon>Muroidea</taxon>
        <taxon>Muridae</taxon>
        <taxon>Murinae</taxon>
        <taxon>Mus</taxon>
        <taxon>Mus</taxon>
    </lineage>
</organism>
<evidence type="ECO:0000250" key="1">
    <source>
        <dbReference type="UniProtKB" id="Q9UNX4"/>
    </source>
</evidence>
<evidence type="ECO:0000256" key="2">
    <source>
        <dbReference type="SAM" id="MobiDB-lite"/>
    </source>
</evidence>
<evidence type="ECO:0000305" key="3"/>
<evidence type="ECO:0007744" key="4">
    <source>
    </source>
</evidence>
<sequence>MGLTKQYLRYVASAVFGLIGSQKGNIVFVTLRGEKGRYVAVPACEHVFIWDLRKGEKILILQGNKQEVTCLCPSPDGLHLAVGYEDGAIRIFSLLSGEGNITFNGHKAAVTSLKYDQLGGRLASGSKDTDVIIWDVINESGLYRLKGHKDAVTQALFLRERNLLVTSGKDTMVKWWDLDNQHCFKTMVGHRTEVWGLVLVSEEKRLITGAADSELRAWDIDYLQEIDDPEEPEPKKIKECPGIQDTPESEDSTLEADDEKSEDRILSCSKAGSIMREGRDRVVNLAVDKTGRILACHGTDSVLEVFCILSKAEVQKKMDKKLKKARKKARLNSANEEEDPETSVSMTLQDEILRVAKIKTSAKIKSFDLIHSPQGELKAVFLLQNNLVELYSLNASLPAPQPVRTSRITIGGHRSDVRTLSFSSDNIAVLSAAADSIKIWNRSTLQCIRTMPCEYALCSFFVPGDRQVVIGTKTGNLQLYDLASGTLLETIAAHDGALWSMSLSPDQRGFVTGGADKAVKFWDFELVTDKNSTQKRLSVKQTRTLQLDEDVLCVSYSPNQKLLAVSLLDCTVKVFYVDTLKFFLSLYGHKLPVLCMDISHDGALIATGSADRNVKIWGLDFGDCHRSLFAHDDSVMYLRFVPKSHLFFTAGKDHKIKQWDADKFEHIQTLEGHHQEIWCLAVSPSGDYVVSASHDKSLRLWERTREPLILEEEREMQREAEYEESVAKEDQPAVPGETQGDNYFTGKKTIETVKAAERIMEAIELHREETAKMKEHRAICKAAGKEVPLPVNPILMAHGNISPSAYVLETFKGIRSSELEEALLVLPFSYVPDVLTLFNEFIQTGLDVELLCRCLFFLLRIHFGQITSNQMLVPVIEKLKETTISKVRQVQDAIGFNMAGLDYLKRECEAKSEVMFFAEATSHLEEKKKKRKNRKRMILTLT</sequence>
<feature type="chain" id="PRO_0000330941" description="WD repeat-containing protein 3">
    <location>
        <begin position="1"/>
        <end position="942"/>
    </location>
</feature>
<feature type="repeat" description="WD 1">
    <location>
        <begin position="21"/>
        <end position="60"/>
    </location>
</feature>
<feature type="repeat" description="WD 2">
    <location>
        <begin position="63"/>
        <end position="102"/>
    </location>
</feature>
<feature type="repeat" description="WD 3">
    <location>
        <begin position="105"/>
        <end position="144"/>
    </location>
</feature>
<feature type="repeat" description="WD 4">
    <location>
        <begin position="147"/>
        <end position="186"/>
    </location>
</feature>
<feature type="repeat" description="WD 5">
    <location>
        <begin position="189"/>
        <end position="228"/>
    </location>
</feature>
<feature type="repeat" description="WD 6">
    <location>
        <begin position="277"/>
        <end position="316"/>
    </location>
</feature>
<feature type="repeat" description="WD 7">
    <location>
        <begin position="412"/>
        <end position="450"/>
    </location>
</feature>
<feature type="repeat" description="WD 8">
    <location>
        <begin position="452"/>
        <end position="490"/>
    </location>
</feature>
<feature type="repeat" description="WD 9">
    <location>
        <begin position="493"/>
        <end position="532"/>
    </location>
</feature>
<feature type="repeat" description="WD 10">
    <location>
        <begin position="546"/>
        <end position="585"/>
    </location>
</feature>
<feature type="repeat" description="WD 11">
    <location>
        <begin position="588"/>
        <end position="629"/>
    </location>
</feature>
<feature type="repeat" description="WD 12">
    <location>
        <begin position="630"/>
        <end position="669"/>
    </location>
</feature>
<feature type="repeat" description="WD 13">
    <location>
        <begin position="672"/>
        <end position="711"/>
    </location>
</feature>
<feature type="region of interest" description="Disordered" evidence="2">
    <location>
        <begin position="230"/>
        <end position="263"/>
    </location>
</feature>
<feature type="region of interest" description="Disordered" evidence="2">
    <location>
        <begin position="723"/>
        <end position="742"/>
    </location>
</feature>
<feature type="compositionally biased region" description="Acidic residues" evidence="2">
    <location>
        <begin position="247"/>
        <end position="260"/>
    </location>
</feature>
<feature type="modified residue" description="Phosphoserine" evidence="4">
    <location>
        <position position="249"/>
    </location>
</feature>
<feature type="modified residue" description="Phosphoserine" evidence="1">
    <location>
        <position position="725"/>
    </location>
</feature>
<feature type="cross-link" description="Glycyl lysine isopeptide (Lys-Gly) (interchain with G-Cter in SUMO2)" evidence="1">
    <location>
        <position position="473"/>
    </location>
</feature>